<dbReference type="EMBL" id="CR628337">
    <property type="protein sequence ID" value="CAH14612.1"/>
    <property type="molecule type" value="Genomic_DNA"/>
</dbReference>
<dbReference type="RefSeq" id="WP_010946090.1">
    <property type="nucleotide sequence ID" value="NC_006369.1"/>
</dbReference>
<dbReference type="SMR" id="Q5WZK0"/>
<dbReference type="GeneID" id="57034344"/>
<dbReference type="KEGG" id="lpf:lpl0381"/>
<dbReference type="LegioList" id="lpl0381"/>
<dbReference type="HOGENOM" id="CLU_061015_2_1_6"/>
<dbReference type="Proteomes" id="UP000002517">
    <property type="component" value="Chromosome"/>
</dbReference>
<dbReference type="GO" id="GO:1990904">
    <property type="term" value="C:ribonucleoprotein complex"/>
    <property type="evidence" value="ECO:0007669"/>
    <property type="project" value="UniProtKB-KW"/>
</dbReference>
<dbReference type="GO" id="GO:0005840">
    <property type="term" value="C:ribosome"/>
    <property type="evidence" value="ECO:0007669"/>
    <property type="project" value="UniProtKB-KW"/>
</dbReference>
<dbReference type="GO" id="GO:0019843">
    <property type="term" value="F:rRNA binding"/>
    <property type="evidence" value="ECO:0007669"/>
    <property type="project" value="UniProtKB-UniRule"/>
</dbReference>
<dbReference type="GO" id="GO:0003735">
    <property type="term" value="F:structural constituent of ribosome"/>
    <property type="evidence" value="ECO:0007669"/>
    <property type="project" value="InterPro"/>
</dbReference>
<dbReference type="GO" id="GO:0000049">
    <property type="term" value="F:tRNA binding"/>
    <property type="evidence" value="ECO:0007669"/>
    <property type="project" value="UniProtKB-UniRule"/>
</dbReference>
<dbReference type="GO" id="GO:0006412">
    <property type="term" value="P:translation"/>
    <property type="evidence" value="ECO:0007669"/>
    <property type="project" value="UniProtKB-UniRule"/>
</dbReference>
<dbReference type="FunFam" id="3.30.1440.10:FF:000001">
    <property type="entry name" value="50S ribosomal protein L5"/>
    <property type="match status" value="1"/>
</dbReference>
<dbReference type="Gene3D" id="3.30.1440.10">
    <property type="match status" value="1"/>
</dbReference>
<dbReference type="HAMAP" id="MF_01333_B">
    <property type="entry name" value="Ribosomal_uL5_B"/>
    <property type="match status" value="1"/>
</dbReference>
<dbReference type="InterPro" id="IPR002132">
    <property type="entry name" value="Ribosomal_uL5"/>
</dbReference>
<dbReference type="InterPro" id="IPR020930">
    <property type="entry name" value="Ribosomal_uL5_bac-type"/>
</dbReference>
<dbReference type="InterPro" id="IPR031309">
    <property type="entry name" value="Ribosomal_uL5_C"/>
</dbReference>
<dbReference type="InterPro" id="IPR020929">
    <property type="entry name" value="Ribosomal_uL5_CS"/>
</dbReference>
<dbReference type="InterPro" id="IPR022803">
    <property type="entry name" value="Ribosomal_uL5_dom_sf"/>
</dbReference>
<dbReference type="InterPro" id="IPR031310">
    <property type="entry name" value="Ribosomal_uL5_N"/>
</dbReference>
<dbReference type="NCBIfam" id="NF000585">
    <property type="entry name" value="PRK00010.1"/>
    <property type="match status" value="1"/>
</dbReference>
<dbReference type="PANTHER" id="PTHR11994">
    <property type="entry name" value="60S RIBOSOMAL PROTEIN L11-RELATED"/>
    <property type="match status" value="1"/>
</dbReference>
<dbReference type="Pfam" id="PF00281">
    <property type="entry name" value="Ribosomal_L5"/>
    <property type="match status" value="1"/>
</dbReference>
<dbReference type="Pfam" id="PF00673">
    <property type="entry name" value="Ribosomal_L5_C"/>
    <property type="match status" value="1"/>
</dbReference>
<dbReference type="PIRSF" id="PIRSF002161">
    <property type="entry name" value="Ribosomal_L5"/>
    <property type="match status" value="1"/>
</dbReference>
<dbReference type="SUPFAM" id="SSF55282">
    <property type="entry name" value="RL5-like"/>
    <property type="match status" value="1"/>
</dbReference>
<dbReference type="PROSITE" id="PS00358">
    <property type="entry name" value="RIBOSOMAL_L5"/>
    <property type="match status" value="1"/>
</dbReference>
<comment type="function">
    <text evidence="1">This is one of the proteins that bind and probably mediate the attachment of the 5S RNA into the large ribosomal subunit, where it forms part of the central protuberance. In the 70S ribosome it contacts protein S13 of the 30S subunit (bridge B1b), connecting the 2 subunits; this bridge is implicated in subunit movement. Contacts the P site tRNA; the 5S rRNA and some of its associated proteins might help stabilize positioning of ribosome-bound tRNAs.</text>
</comment>
<comment type="subunit">
    <text evidence="1">Part of the 50S ribosomal subunit; part of the 5S rRNA/L5/L18/L25 subcomplex. Contacts the 5S rRNA and the P site tRNA. Forms a bridge to the 30S subunit in the 70S ribosome.</text>
</comment>
<comment type="similarity">
    <text evidence="1">Belongs to the universal ribosomal protein uL5 family.</text>
</comment>
<name>RL5_LEGPL</name>
<accession>Q5WZK0</accession>
<sequence length="183" mass="20939">MARLKEFYKKDVVTMMMKRFNYSSVMEVPRILKITLNMGVGEAVGDKKVMNHAIEDMTLISGQKPVVTKARKSIAGFKIREGWPIGCKVTLRRERMYEFLDRLISITLPRVRDFRGLNPKSFDGTGNYSMGIHEQIVFPEIDYDKTDGIRGLDICITTSAKTNEEAKALLEAFNLPLKDKDRK</sequence>
<proteinExistence type="inferred from homology"/>
<evidence type="ECO:0000255" key="1">
    <source>
        <dbReference type="HAMAP-Rule" id="MF_01333"/>
    </source>
</evidence>
<evidence type="ECO:0000305" key="2"/>
<feature type="chain" id="PRO_0000243013" description="Large ribosomal subunit protein uL5">
    <location>
        <begin position="1"/>
        <end position="183"/>
    </location>
</feature>
<keyword id="KW-0687">Ribonucleoprotein</keyword>
<keyword id="KW-0689">Ribosomal protein</keyword>
<keyword id="KW-0694">RNA-binding</keyword>
<keyword id="KW-0699">rRNA-binding</keyword>
<keyword id="KW-0820">tRNA-binding</keyword>
<protein>
    <recommendedName>
        <fullName evidence="1">Large ribosomal subunit protein uL5</fullName>
    </recommendedName>
    <alternativeName>
        <fullName evidence="2">50S ribosomal protein L5</fullName>
    </alternativeName>
</protein>
<gene>
    <name evidence="1" type="primary">rplE</name>
    <name type="ordered locus">lpl0381</name>
</gene>
<organism>
    <name type="scientific">Legionella pneumophila (strain Lens)</name>
    <dbReference type="NCBI Taxonomy" id="297245"/>
    <lineage>
        <taxon>Bacteria</taxon>
        <taxon>Pseudomonadati</taxon>
        <taxon>Pseudomonadota</taxon>
        <taxon>Gammaproteobacteria</taxon>
        <taxon>Legionellales</taxon>
        <taxon>Legionellaceae</taxon>
        <taxon>Legionella</taxon>
    </lineage>
</organism>
<reference key="1">
    <citation type="journal article" date="2004" name="Nat. Genet.">
        <title>Evidence in the Legionella pneumophila genome for exploitation of host cell functions and high genome plasticity.</title>
        <authorList>
            <person name="Cazalet C."/>
            <person name="Rusniok C."/>
            <person name="Brueggemann H."/>
            <person name="Zidane N."/>
            <person name="Magnier A."/>
            <person name="Ma L."/>
            <person name="Tichit M."/>
            <person name="Jarraud S."/>
            <person name="Bouchier C."/>
            <person name="Vandenesch F."/>
            <person name="Kunst F."/>
            <person name="Etienne J."/>
            <person name="Glaser P."/>
            <person name="Buchrieser C."/>
        </authorList>
    </citation>
    <scope>NUCLEOTIDE SEQUENCE [LARGE SCALE GENOMIC DNA]</scope>
    <source>
        <strain>Lens</strain>
    </source>
</reference>